<protein>
    <recommendedName>
        <fullName evidence="1">Leucyl/phenylalanyl-tRNA--protein transferase</fullName>
        <ecNumber evidence="1">2.3.2.6</ecNumber>
    </recommendedName>
    <alternativeName>
        <fullName evidence="1">L/F-transferase</fullName>
    </alternativeName>
    <alternativeName>
        <fullName evidence="1">Leucyltransferase</fullName>
    </alternativeName>
    <alternativeName>
        <fullName evidence="1">Phenyalanyltransferase</fullName>
    </alternativeName>
</protein>
<reference key="1">
    <citation type="journal article" date="2005" name="Infect. Immun.">
        <title>Whole-genome analyses of speciation events in pathogenic Brucellae.</title>
        <authorList>
            <person name="Chain P.S."/>
            <person name="Comerci D.J."/>
            <person name="Tolmasky M.E."/>
            <person name="Larimer F.W."/>
            <person name="Malfatti S.A."/>
            <person name="Vergez L.M."/>
            <person name="Aguero F."/>
            <person name="Land M.L."/>
            <person name="Ugalde R.A."/>
            <person name="Garcia E."/>
        </authorList>
    </citation>
    <scope>NUCLEOTIDE SEQUENCE [LARGE SCALE GENOMIC DNA]</scope>
    <source>
        <strain>2308</strain>
    </source>
</reference>
<keyword id="KW-0012">Acyltransferase</keyword>
<keyword id="KW-0963">Cytoplasm</keyword>
<keyword id="KW-1185">Reference proteome</keyword>
<keyword id="KW-0808">Transferase</keyword>
<sequence>MTAEAPPDDDIIEPEMLLRAYATGIFPMAEEADDPEVFWVRPEKRGVIPLDGFHIPRSLQKTIRQGIFKIRLDSNFAGVIEGCASGTGERARTWINEPIRRAYAKLFEIGHCHTVEAWYEGKLAGGLYGVTLGRAFFGESMFTRKRDASKVCLAYLVQHLSRQGFVLLDTQFTTPHLERFGALEVPRKEYEEMLERALEGIARF</sequence>
<organism>
    <name type="scientific">Brucella abortus (strain 2308)</name>
    <dbReference type="NCBI Taxonomy" id="359391"/>
    <lineage>
        <taxon>Bacteria</taxon>
        <taxon>Pseudomonadati</taxon>
        <taxon>Pseudomonadota</taxon>
        <taxon>Alphaproteobacteria</taxon>
        <taxon>Hyphomicrobiales</taxon>
        <taxon>Brucellaceae</taxon>
        <taxon>Brucella/Ochrobactrum group</taxon>
        <taxon>Brucella</taxon>
    </lineage>
</organism>
<proteinExistence type="inferred from homology"/>
<name>LFTR_BRUA2</name>
<accession>Q2YNP4</accession>
<gene>
    <name evidence="1" type="primary">aat</name>
    <name type="ordered locus">BAB1_0923</name>
</gene>
<evidence type="ECO:0000255" key="1">
    <source>
        <dbReference type="HAMAP-Rule" id="MF_00688"/>
    </source>
</evidence>
<evidence type="ECO:0000305" key="2"/>
<dbReference type="EC" id="2.3.2.6" evidence="1"/>
<dbReference type="EMBL" id="AM040264">
    <property type="protein sequence ID" value="CAJ10879.1"/>
    <property type="status" value="ALT_INIT"/>
    <property type="molecule type" value="Genomic_DNA"/>
</dbReference>
<dbReference type="SMR" id="Q2YNP4"/>
<dbReference type="STRING" id="359391.BAB1_0923"/>
<dbReference type="KEGG" id="bmf:BAB1_0923"/>
<dbReference type="HOGENOM" id="CLU_075045_1_1_5"/>
<dbReference type="PhylomeDB" id="Q2YNP4"/>
<dbReference type="Proteomes" id="UP000002719">
    <property type="component" value="Chromosome I"/>
</dbReference>
<dbReference type="GO" id="GO:0005737">
    <property type="term" value="C:cytoplasm"/>
    <property type="evidence" value="ECO:0007669"/>
    <property type="project" value="UniProtKB-SubCell"/>
</dbReference>
<dbReference type="GO" id="GO:0008914">
    <property type="term" value="F:leucyl-tRNA--protein transferase activity"/>
    <property type="evidence" value="ECO:0007669"/>
    <property type="project" value="UniProtKB-UniRule"/>
</dbReference>
<dbReference type="GO" id="GO:0030163">
    <property type="term" value="P:protein catabolic process"/>
    <property type="evidence" value="ECO:0007669"/>
    <property type="project" value="UniProtKB-UniRule"/>
</dbReference>
<dbReference type="FunFam" id="3.40.630.70:FF:000001">
    <property type="entry name" value="Leucyl/phenylalanyl-tRNA--protein transferase"/>
    <property type="match status" value="1"/>
</dbReference>
<dbReference type="Gene3D" id="3.40.630.70">
    <property type="entry name" value="Leucyl/phenylalanyl-tRNA-protein transferase, C-terminal domain"/>
    <property type="match status" value="1"/>
</dbReference>
<dbReference type="Gene3D" id="3.30.70.3550">
    <property type="entry name" value="Leucyl/phenylalanyl-tRNA-protein transferase, N-terminal domain"/>
    <property type="match status" value="1"/>
</dbReference>
<dbReference type="HAMAP" id="MF_00688">
    <property type="entry name" value="Leu_Phe_trans"/>
    <property type="match status" value="1"/>
</dbReference>
<dbReference type="InterPro" id="IPR016181">
    <property type="entry name" value="Acyl_CoA_acyltransferase"/>
</dbReference>
<dbReference type="InterPro" id="IPR004616">
    <property type="entry name" value="Leu/Phe-tRNA_Trfase"/>
</dbReference>
<dbReference type="InterPro" id="IPR042203">
    <property type="entry name" value="Leu/Phe-tRNA_Trfase_C"/>
</dbReference>
<dbReference type="InterPro" id="IPR042221">
    <property type="entry name" value="Leu/Phe-tRNA_Trfase_N"/>
</dbReference>
<dbReference type="NCBIfam" id="TIGR00667">
    <property type="entry name" value="aat"/>
    <property type="match status" value="1"/>
</dbReference>
<dbReference type="PANTHER" id="PTHR30098">
    <property type="entry name" value="LEUCYL/PHENYLALANYL-TRNA--PROTEIN TRANSFERASE"/>
    <property type="match status" value="1"/>
</dbReference>
<dbReference type="PANTHER" id="PTHR30098:SF2">
    <property type="entry name" value="LEUCYL_PHENYLALANYL-TRNA--PROTEIN TRANSFERASE"/>
    <property type="match status" value="1"/>
</dbReference>
<dbReference type="Pfam" id="PF03588">
    <property type="entry name" value="Leu_Phe_trans"/>
    <property type="match status" value="1"/>
</dbReference>
<dbReference type="SUPFAM" id="SSF55729">
    <property type="entry name" value="Acyl-CoA N-acyltransferases (Nat)"/>
    <property type="match status" value="1"/>
</dbReference>
<comment type="function">
    <text evidence="1">Functions in the N-end rule pathway of protein degradation where it conjugates Leu, Phe and, less efficiently, Met from aminoacyl-tRNAs to the N-termini of proteins containing an N-terminal arginine or lysine.</text>
</comment>
<comment type="catalytic activity">
    <reaction evidence="1">
        <text>N-terminal L-lysyl-[protein] + L-leucyl-tRNA(Leu) = N-terminal L-leucyl-L-lysyl-[protein] + tRNA(Leu) + H(+)</text>
        <dbReference type="Rhea" id="RHEA:12340"/>
        <dbReference type="Rhea" id="RHEA-COMP:9613"/>
        <dbReference type="Rhea" id="RHEA-COMP:9622"/>
        <dbReference type="Rhea" id="RHEA-COMP:12670"/>
        <dbReference type="Rhea" id="RHEA-COMP:12671"/>
        <dbReference type="ChEBI" id="CHEBI:15378"/>
        <dbReference type="ChEBI" id="CHEBI:65249"/>
        <dbReference type="ChEBI" id="CHEBI:78442"/>
        <dbReference type="ChEBI" id="CHEBI:78494"/>
        <dbReference type="ChEBI" id="CHEBI:133043"/>
        <dbReference type="EC" id="2.3.2.6"/>
    </reaction>
</comment>
<comment type="catalytic activity">
    <reaction evidence="1">
        <text>N-terminal L-arginyl-[protein] + L-leucyl-tRNA(Leu) = N-terminal L-leucyl-L-arginyl-[protein] + tRNA(Leu) + H(+)</text>
        <dbReference type="Rhea" id="RHEA:50416"/>
        <dbReference type="Rhea" id="RHEA-COMP:9613"/>
        <dbReference type="Rhea" id="RHEA-COMP:9622"/>
        <dbReference type="Rhea" id="RHEA-COMP:12672"/>
        <dbReference type="Rhea" id="RHEA-COMP:12673"/>
        <dbReference type="ChEBI" id="CHEBI:15378"/>
        <dbReference type="ChEBI" id="CHEBI:64719"/>
        <dbReference type="ChEBI" id="CHEBI:78442"/>
        <dbReference type="ChEBI" id="CHEBI:78494"/>
        <dbReference type="ChEBI" id="CHEBI:133044"/>
        <dbReference type="EC" id="2.3.2.6"/>
    </reaction>
</comment>
<comment type="catalytic activity">
    <reaction evidence="1">
        <text>L-phenylalanyl-tRNA(Phe) + an N-terminal L-alpha-aminoacyl-[protein] = an N-terminal L-phenylalanyl-L-alpha-aminoacyl-[protein] + tRNA(Phe)</text>
        <dbReference type="Rhea" id="RHEA:43632"/>
        <dbReference type="Rhea" id="RHEA-COMP:9668"/>
        <dbReference type="Rhea" id="RHEA-COMP:9699"/>
        <dbReference type="Rhea" id="RHEA-COMP:10636"/>
        <dbReference type="Rhea" id="RHEA-COMP:10637"/>
        <dbReference type="ChEBI" id="CHEBI:78442"/>
        <dbReference type="ChEBI" id="CHEBI:78531"/>
        <dbReference type="ChEBI" id="CHEBI:78597"/>
        <dbReference type="ChEBI" id="CHEBI:83561"/>
        <dbReference type="EC" id="2.3.2.6"/>
    </reaction>
</comment>
<comment type="subcellular location">
    <subcellularLocation>
        <location evidence="1">Cytoplasm</location>
    </subcellularLocation>
</comment>
<comment type="similarity">
    <text evidence="1">Belongs to the L/F-transferase family.</text>
</comment>
<comment type="sequence caution" evidence="2">
    <conflict type="erroneous initiation">
        <sequence resource="EMBL-CDS" id="CAJ10879"/>
    </conflict>
</comment>
<feature type="chain" id="PRO_0000258047" description="Leucyl/phenylalanyl-tRNA--protein transferase">
    <location>
        <begin position="1"/>
        <end position="204"/>
    </location>
</feature>